<organism>
    <name type="scientific">Legionella pneumophila (strain Paris)</name>
    <dbReference type="NCBI Taxonomy" id="297246"/>
    <lineage>
        <taxon>Bacteria</taxon>
        <taxon>Pseudomonadati</taxon>
        <taxon>Pseudomonadota</taxon>
        <taxon>Gammaproteobacteria</taxon>
        <taxon>Legionellales</taxon>
        <taxon>Legionellaceae</taxon>
        <taxon>Legionella</taxon>
    </lineage>
</organism>
<name>AROC_LEGPA</name>
<sequence length="352" mass="38428">MSGNTFGALFTVTTFGESHGPAIGCVVDGCPPGMSLTEADIQPFLDKRKPGQSKYTTQRREEDKVQILSGVFDGKTTGAPIALLIQNTDQRSRDYEDIKNLFRPGHADFTYHYKYGHRDYRGGGRSSARETAARVAAGAIARLYLKRYLNLDIIGYLQQMGDLKLQFENENEINKNPFFCPNNKQTQELADYIDRLRRQGDSVGARVKILARGVPTGLGDPVFDKLDATLAYAMMSINAVKGVEIGAGFNAVEQLGSYHRDQMTAKGFLSNHAGGILGGIATGQPIEVSIALKPTSSITTPGQTINTEGEEVTVVTKGRHDPCVGIRAVPIAEAMMALVLMDHYLRHKAQCK</sequence>
<dbReference type="EC" id="4.2.3.5" evidence="1"/>
<dbReference type="EMBL" id="CR628336">
    <property type="protein sequence ID" value="CAH13404.1"/>
    <property type="molecule type" value="Genomic_DNA"/>
</dbReference>
<dbReference type="RefSeq" id="WP_015961412.1">
    <property type="nucleotide sequence ID" value="NC_006368.1"/>
</dbReference>
<dbReference type="SMR" id="Q5X2Y6"/>
<dbReference type="KEGG" id="lpp:lpp2251"/>
<dbReference type="LegioList" id="lpp2251"/>
<dbReference type="HOGENOM" id="CLU_034547_0_2_6"/>
<dbReference type="UniPathway" id="UPA00053">
    <property type="reaction ID" value="UER00090"/>
</dbReference>
<dbReference type="GO" id="GO:0005829">
    <property type="term" value="C:cytosol"/>
    <property type="evidence" value="ECO:0007669"/>
    <property type="project" value="TreeGrafter"/>
</dbReference>
<dbReference type="GO" id="GO:0004107">
    <property type="term" value="F:chorismate synthase activity"/>
    <property type="evidence" value="ECO:0007669"/>
    <property type="project" value="UniProtKB-UniRule"/>
</dbReference>
<dbReference type="GO" id="GO:0010181">
    <property type="term" value="F:FMN binding"/>
    <property type="evidence" value="ECO:0007669"/>
    <property type="project" value="TreeGrafter"/>
</dbReference>
<dbReference type="GO" id="GO:0008652">
    <property type="term" value="P:amino acid biosynthetic process"/>
    <property type="evidence" value="ECO:0007669"/>
    <property type="project" value="UniProtKB-KW"/>
</dbReference>
<dbReference type="GO" id="GO:0009073">
    <property type="term" value="P:aromatic amino acid family biosynthetic process"/>
    <property type="evidence" value="ECO:0007669"/>
    <property type="project" value="UniProtKB-KW"/>
</dbReference>
<dbReference type="GO" id="GO:0009423">
    <property type="term" value="P:chorismate biosynthetic process"/>
    <property type="evidence" value="ECO:0007669"/>
    <property type="project" value="UniProtKB-UniRule"/>
</dbReference>
<dbReference type="CDD" id="cd07304">
    <property type="entry name" value="Chorismate_synthase"/>
    <property type="match status" value="1"/>
</dbReference>
<dbReference type="FunFam" id="3.60.150.10:FF:000001">
    <property type="entry name" value="Chorismate synthase"/>
    <property type="match status" value="1"/>
</dbReference>
<dbReference type="Gene3D" id="3.60.150.10">
    <property type="entry name" value="Chorismate synthase AroC"/>
    <property type="match status" value="1"/>
</dbReference>
<dbReference type="HAMAP" id="MF_00300">
    <property type="entry name" value="Chorismate_synth"/>
    <property type="match status" value="1"/>
</dbReference>
<dbReference type="InterPro" id="IPR000453">
    <property type="entry name" value="Chorismate_synth"/>
</dbReference>
<dbReference type="InterPro" id="IPR035904">
    <property type="entry name" value="Chorismate_synth_AroC_sf"/>
</dbReference>
<dbReference type="InterPro" id="IPR020541">
    <property type="entry name" value="Chorismate_synthase_CS"/>
</dbReference>
<dbReference type="NCBIfam" id="TIGR00033">
    <property type="entry name" value="aroC"/>
    <property type="match status" value="1"/>
</dbReference>
<dbReference type="NCBIfam" id="NF003793">
    <property type="entry name" value="PRK05382.1"/>
    <property type="match status" value="1"/>
</dbReference>
<dbReference type="PANTHER" id="PTHR21085">
    <property type="entry name" value="CHORISMATE SYNTHASE"/>
    <property type="match status" value="1"/>
</dbReference>
<dbReference type="PANTHER" id="PTHR21085:SF0">
    <property type="entry name" value="CHORISMATE SYNTHASE"/>
    <property type="match status" value="1"/>
</dbReference>
<dbReference type="Pfam" id="PF01264">
    <property type="entry name" value="Chorismate_synt"/>
    <property type="match status" value="1"/>
</dbReference>
<dbReference type="PIRSF" id="PIRSF001456">
    <property type="entry name" value="Chorismate_synth"/>
    <property type="match status" value="1"/>
</dbReference>
<dbReference type="SUPFAM" id="SSF103263">
    <property type="entry name" value="Chorismate synthase, AroC"/>
    <property type="match status" value="1"/>
</dbReference>
<dbReference type="PROSITE" id="PS00787">
    <property type="entry name" value="CHORISMATE_SYNTHASE_1"/>
    <property type="match status" value="1"/>
</dbReference>
<dbReference type="PROSITE" id="PS00788">
    <property type="entry name" value="CHORISMATE_SYNTHASE_2"/>
    <property type="match status" value="1"/>
</dbReference>
<dbReference type="PROSITE" id="PS00789">
    <property type="entry name" value="CHORISMATE_SYNTHASE_3"/>
    <property type="match status" value="1"/>
</dbReference>
<gene>
    <name evidence="1" type="primary">aroC</name>
    <name type="ordered locus">lpp2251</name>
</gene>
<feature type="chain" id="PRO_0000140600" description="Chorismate synthase">
    <location>
        <begin position="1"/>
        <end position="352"/>
    </location>
</feature>
<feature type="binding site" evidence="1">
    <location>
        <position position="48"/>
    </location>
    <ligand>
        <name>NADP(+)</name>
        <dbReference type="ChEBI" id="CHEBI:58349"/>
    </ligand>
</feature>
<feature type="binding site" evidence="1">
    <location>
        <begin position="125"/>
        <end position="127"/>
    </location>
    <ligand>
        <name>FMN</name>
        <dbReference type="ChEBI" id="CHEBI:58210"/>
    </ligand>
</feature>
<feature type="binding site" evidence="1">
    <location>
        <begin position="238"/>
        <end position="239"/>
    </location>
    <ligand>
        <name>FMN</name>
        <dbReference type="ChEBI" id="CHEBI:58210"/>
    </ligand>
</feature>
<feature type="binding site" evidence="1">
    <location>
        <position position="278"/>
    </location>
    <ligand>
        <name>FMN</name>
        <dbReference type="ChEBI" id="CHEBI:58210"/>
    </ligand>
</feature>
<feature type="binding site" evidence="1">
    <location>
        <begin position="293"/>
        <end position="297"/>
    </location>
    <ligand>
        <name>FMN</name>
        <dbReference type="ChEBI" id="CHEBI:58210"/>
    </ligand>
</feature>
<feature type="binding site" evidence="1">
    <location>
        <position position="319"/>
    </location>
    <ligand>
        <name>FMN</name>
        <dbReference type="ChEBI" id="CHEBI:58210"/>
    </ligand>
</feature>
<keyword id="KW-0028">Amino-acid biosynthesis</keyword>
<keyword id="KW-0057">Aromatic amino acid biosynthesis</keyword>
<keyword id="KW-0274">FAD</keyword>
<keyword id="KW-0285">Flavoprotein</keyword>
<keyword id="KW-0288">FMN</keyword>
<keyword id="KW-0456">Lyase</keyword>
<keyword id="KW-0521">NADP</keyword>
<comment type="function">
    <text evidence="1">Catalyzes the anti-1,4-elimination of the C-3 phosphate and the C-6 proR hydrogen from 5-enolpyruvylshikimate-3-phosphate (EPSP) to yield chorismate, which is the branch point compound that serves as the starting substrate for the three terminal pathways of aromatic amino acid biosynthesis. This reaction introduces a second double bond into the aromatic ring system.</text>
</comment>
<comment type="catalytic activity">
    <reaction evidence="1">
        <text>5-O-(1-carboxyvinyl)-3-phosphoshikimate = chorismate + phosphate</text>
        <dbReference type="Rhea" id="RHEA:21020"/>
        <dbReference type="ChEBI" id="CHEBI:29748"/>
        <dbReference type="ChEBI" id="CHEBI:43474"/>
        <dbReference type="ChEBI" id="CHEBI:57701"/>
        <dbReference type="EC" id="4.2.3.5"/>
    </reaction>
</comment>
<comment type="cofactor">
    <cofactor evidence="1">
        <name>FMNH2</name>
        <dbReference type="ChEBI" id="CHEBI:57618"/>
    </cofactor>
    <text evidence="1">Reduced FMN (FMNH(2)).</text>
</comment>
<comment type="pathway">
    <text evidence="1">Metabolic intermediate biosynthesis; chorismate biosynthesis; chorismate from D-erythrose 4-phosphate and phosphoenolpyruvate: step 7/7.</text>
</comment>
<comment type="subunit">
    <text evidence="1">Homotetramer.</text>
</comment>
<comment type="similarity">
    <text evidence="1">Belongs to the chorismate synthase family.</text>
</comment>
<proteinExistence type="inferred from homology"/>
<reference key="1">
    <citation type="journal article" date="2004" name="Nat. Genet.">
        <title>Evidence in the Legionella pneumophila genome for exploitation of host cell functions and high genome plasticity.</title>
        <authorList>
            <person name="Cazalet C."/>
            <person name="Rusniok C."/>
            <person name="Brueggemann H."/>
            <person name="Zidane N."/>
            <person name="Magnier A."/>
            <person name="Ma L."/>
            <person name="Tichit M."/>
            <person name="Jarraud S."/>
            <person name="Bouchier C."/>
            <person name="Vandenesch F."/>
            <person name="Kunst F."/>
            <person name="Etienne J."/>
            <person name="Glaser P."/>
            <person name="Buchrieser C."/>
        </authorList>
    </citation>
    <scope>NUCLEOTIDE SEQUENCE [LARGE SCALE GENOMIC DNA]</scope>
    <source>
        <strain>Paris</strain>
    </source>
</reference>
<accession>Q5X2Y6</accession>
<evidence type="ECO:0000255" key="1">
    <source>
        <dbReference type="HAMAP-Rule" id="MF_00300"/>
    </source>
</evidence>
<protein>
    <recommendedName>
        <fullName evidence="1">Chorismate synthase</fullName>
        <shortName evidence="1">CS</shortName>
        <ecNumber evidence="1">4.2.3.5</ecNumber>
    </recommendedName>
    <alternativeName>
        <fullName evidence="1">5-enolpyruvylshikimate-3-phosphate phospholyase</fullName>
    </alternativeName>
</protein>